<comment type="subcellular location">
    <subcellularLocation>
        <location>Plastid</location>
        <location>Chloroplast</location>
    </subcellularLocation>
</comment>
<comment type="similarity">
    <text evidence="1">Belongs to the universal ribosomal protein uS2 family.</text>
</comment>
<keyword id="KW-0150">Chloroplast</keyword>
<keyword id="KW-0934">Plastid</keyword>
<keyword id="KW-0687">Ribonucleoprotein</keyword>
<keyword id="KW-0689">Ribosomal protein</keyword>
<geneLocation type="chloroplast"/>
<proteinExistence type="inferred from homology"/>
<evidence type="ECO:0000305" key="1"/>
<name>RR2_POPAL</name>
<feature type="chain" id="PRO_0000352153" description="Small ribosomal subunit protein uS2c">
    <location>
        <begin position="1"/>
        <end position="236"/>
    </location>
</feature>
<organism>
    <name type="scientific">Populus alba</name>
    <name type="common">White poplar</name>
    <dbReference type="NCBI Taxonomy" id="43335"/>
    <lineage>
        <taxon>Eukaryota</taxon>
        <taxon>Viridiplantae</taxon>
        <taxon>Streptophyta</taxon>
        <taxon>Embryophyta</taxon>
        <taxon>Tracheophyta</taxon>
        <taxon>Spermatophyta</taxon>
        <taxon>Magnoliopsida</taxon>
        <taxon>eudicotyledons</taxon>
        <taxon>Gunneridae</taxon>
        <taxon>Pentapetalae</taxon>
        <taxon>rosids</taxon>
        <taxon>fabids</taxon>
        <taxon>Malpighiales</taxon>
        <taxon>Salicaceae</taxon>
        <taxon>Saliceae</taxon>
        <taxon>Populus</taxon>
    </lineage>
</organism>
<dbReference type="EMBL" id="AP008956">
    <property type="protein sequence ID" value="BAE97194.1"/>
    <property type="molecule type" value="Genomic_DNA"/>
</dbReference>
<dbReference type="RefSeq" id="YP_665547.1">
    <property type="nucleotide sequence ID" value="NC_008235.1"/>
</dbReference>
<dbReference type="SMR" id="Q14FG8"/>
<dbReference type="GeneID" id="4178264"/>
<dbReference type="KEGG" id="palz:4178264"/>
<dbReference type="OrthoDB" id="8304at3646"/>
<dbReference type="GO" id="GO:0009507">
    <property type="term" value="C:chloroplast"/>
    <property type="evidence" value="ECO:0007669"/>
    <property type="project" value="UniProtKB-SubCell"/>
</dbReference>
<dbReference type="GO" id="GO:0005763">
    <property type="term" value="C:mitochondrial small ribosomal subunit"/>
    <property type="evidence" value="ECO:0007669"/>
    <property type="project" value="TreeGrafter"/>
</dbReference>
<dbReference type="GO" id="GO:0003735">
    <property type="term" value="F:structural constituent of ribosome"/>
    <property type="evidence" value="ECO:0007669"/>
    <property type="project" value="InterPro"/>
</dbReference>
<dbReference type="GO" id="GO:0006412">
    <property type="term" value="P:translation"/>
    <property type="evidence" value="ECO:0007669"/>
    <property type="project" value="UniProtKB-UniRule"/>
</dbReference>
<dbReference type="CDD" id="cd01425">
    <property type="entry name" value="RPS2"/>
    <property type="match status" value="1"/>
</dbReference>
<dbReference type="FunFam" id="3.40.50.10490:FF:000101">
    <property type="match status" value="1"/>
</dbReference>
<dbReference type="FunFam" id="1.10.287.610:FF:000001">
    <property type="entry name" value="30S ribosomal protein S2"/>
    <property type="match status" value="1"/>
</dbReference>
<dbReference type="Gene3D" id="3.40.50.10490">
    <property type="entry name" value="Glucose-6-phosphate isomerase like protein, domain 1"/>
    <property type="match status" value="1"/>
</dbReference>
<dbReference type="Gene3D" id="1.10.287.610">
    <property type="entry name" value="Helix hairpin bin"/>
    <property type="match status" value="1"/>
</dbReference>
<dbReference type="HAMAP" id="MF_00291_B">
    <property type="entry name" value="Ribosomal_uS2_B"/>
    <property type="match status" value="1"/>
</dbReference>
<dbReference type="InterPro" id="IPR001865">
    <property type="entry name" value="Ribosomal_uS2"/>
</dbReference>
<dbReference type="InterPro" id="IPR005706">
    <property type="entry name" value="Ribosomal_uS2_bac/mit/plastid"/>
</dbReference>
<dbReference type="InterPro" id="IPR018130">
    <property type="entry name" value="Ribosomal_uS2_CS"/>
</dbReference>
<dbReference type="InterPro" id="IPR023591">
    <property type="entry name" value="Ribosomal_uS2_flav_dom_sf"/>
</dbReference>
<dbReference type="NCBIfam" id="TIGR01011">
    <property type="entry name" value="rpsB_bact"/>
    <property type="match status" value="1"/>
</dbReference>
<dbReference type="PANTHER" id="PTHR12534">
    <property type="entry name" value="30S RIBOSOMAL PROTEIN S2 PROKARYOTIC AND ORGANELLAR"/>
    <property type="match status" value="1"/>
</dbReference>
<dbReference type="PANTHER" id="PTHR12534:SF0">
    <property type="entry name" value="SMALL RIBOSOMAL SUBUNIT PROTEIN US2M"/>
    <property type="match status" value="1"/>
</dbReference>
<dbReference type="Pfam" id="PF00318">
    <property type="entry name" value="Ribosomal_S2"/>
    <property type="match status" value="1"/>
</dbReference>
<dbReference type="PRINTS" id="PR00395">
    <property type="entry name" value="RIBOSOMALS2"/>
</dbReference>
<dbReference type="SUPFAM" id="SSF52313">
    <property type="entry name" value="Ribosomal protein S2"/>
    <property type="match status" value="1"/>
</dbReference>
<dbReference type="PROSITE" id="PS00962">
    <property type="entry name" value="RIBOSOMAL_S2_1"/>
    <property type="match status" value="1"/>
</dbReference>
<dbReference type="PROSITE" id="PS00963">
    <property type="entry name" value="RIBOSOMAL_S2_2"/>
    <property type="match status" value="1"/>
</dbReference>
<accession>Q14FG8</accession>
<sequence>MIRRYWNINLKEMLETGVHFGHATRKWNPKMAPYISAKRKGIHITNLTRTARFLSEACDLVFDAASRRKQFLIVGTKNKAADPVARAAIRARCHYVNKKWLGGLLTNWSTTEMRLQKFRDLRMEQKTGGIHRLPKGDAARLKRQLFHLQTYLGGIKYMTGLPDIVIIVDQQEEYMALQECITLGIPTICLIDTNCDPDLTDISIPANDDAIASIRLILNKLVFAICEGRSSYIRNP</sequence>
<protein>
    <recommendedName>
        <fullName evidence="1">Small ribosomal subunit protein uS2c</fullName>
    </recommendedName>
    <alternativeName>
        <fullName>30S ribosomal protein S2, chloroplastic</fullName>
    </alternativeName>
</protein>
<gene>
    <name type="primary">rps2</name>
</gene>
<reference key="1">
    <citation type="submission" date="2005-03" db="EMBL/GenBank/DDBJ databases">
        <title>Complete structure of the chloroplast genome of Populus alba.</title>
        <authorList>
            <person name="Okumura S."/>
            <person name="Yamashita A."/>
            <person name="Kanamoto H."/>
            <person name="Hattori M."/>
            <person name="Takase H."/>
            <person name="Tomizawa K."/>
        </authorList>
    </citation>
    <scope>NUCLEOTIDE SEQUENCE [LARGE SCALE GENOMIC DNA]</scope>
</reference>